<protein>
    <recommendedName>
        <fullName evidence="1">Malate dehydrogenase</fullName>
        <ecNumber evidence="1">1.1.1.37</ecNumber>
    </recommendedName>
</protein>
<reference key="1">
    <citation type="journal article" date="2007" name="Genome Res.">
        <title>Genome characteristics of facultatively symbiotic Frankia sp. strains reflect host range and host plant biogeography.</title>
        <authorList>
            <person name="Normand P."/>
            <person name="Lapierre P."/>
            <person name="Tisa L.S."/>
            <person name="Gogarten J.P."/>
            <person name="Alloisio N."/>
            <person name="Bagnarol E."/>
            <person name="Bassi C.A."/>
            <person name="Berry A.M."/>
            <person name="Bickhart D.M."/>
            <person name="Choisne N."/>
            <person name="Couloux A."/>
            <person name="Cournoyer B."/>
            <person name="Cruveiller S."/>
            <person name="Daubin V."/>
            <person name="Demange N."/>
            <person name="Francino M.P."/>
            <person name="Goltsman E."/>
            <person name="Huang Y."/>
            <person name="Kopp O.R."/>
            <person name="Labarre L."/>
            <person name="Lapidus A."/>
            <person name="Lavire C."/>
            <person name="Marechal J."/>
            <person name="Martinez M."/>
            <person name="Mastronunzio J.E."/>
            <person name="Mullin B.C."/>
            <person name="Niemann J."/>
            <person name="Pujic P."/>
            <person name="Rawnsley T."/>
            <person name="Rouy Z."/>
            <person name="Schenowitz C."/>
            <person name="Sellstedt A."/>
            <person name="Tavares F."/>
            <person name="Tomkins J.P."/>
            <person name="Vallenet D."/>
            <person name="Valverde C."/>
            <person name="Wall L.G."/>
            <person name="Wang Y."/>
            <person name="Medigue C."/>
            <person name="Benson D.R."/>
        </authorList>
    </citation>
    <scope>NUCLEOTIDE SEQUENCE [LARGE SCALE GENOMIC DNA]</scope>
    <source>
        <strain>DSM 45986 / CECT 9034 / ACN14a</strain>
    </source>
</reference>
<keyword id="KW-0520">NAD</keyword>
<keyword id="KW-0560">Oxidoreductase</keyword>
<keyword id="KW-1185">Reference proteome</keyword>
<keyword id="KW-0816">Tricarboxylic acid cycle</keyword>
<accession>Q0RE66</accession>
<organism>
    <name type="scientific">Frankia alni (strain DSM 45986 / CECT 9034 / ACN14a)</name>
    <dbReference type="NCBI Taxonomy" id="326424"/>
    <lineage>
        <taxon>Bacteria</taxon>
        <taxon>Bacillati</taxon>
        <taxon>Actinomycetota</taxon>
        <taxon>Actinomycetes</taxon>
        <taxon>Frankiales</taxon>
        <taxon>Frankiaceae</taxon>
        <taxon>Frankia</taxon>
    </lineage>
</organism>
<comment type="function">
    <text evidence="1">Catalyzes the reversible oxidation of malate to oxaloacetate.</text>
</comment>
<comment type="catalytic activity">
    <reaction evidence="1">
        <text>(S)-malate + NAD(+) = oxaloacetate + NADH + H(+)</text>
        <dbReference type="Rhea" id="RHEA:21432"/>
        <dbReference type="ChEBI" id="CHEBI:15378"/>
        <dbReference type="ChEBI" id="CHEBI:15589"/>
        <dbReference type="ChEBI" id="CHEBI:16452"/>
        <dbReference type="ChEBI" id="CHEBI:57540"/>
        <dbReference type="ChEBI" id="CHEBI:57945"/>
        <dbReference type="EC" id="1.1.1.37"/>
    </reaction>
</comment>
<comment type="similarity">
    <text evidence="1">Belongs to the LDH/MDH superfamily. MDH type 2 family.</text>
</comment>
<name>MDH_FRAAA</name>
<sequence>MSSTPVNVTVTGAAGQIGYALLFRIASGQLLGADTPVRLRLLEIPQAVRAAEGTALELEDSAFPLLAGVDVFDDAKRAFEGTNVALLVGARPRTKGMERGDLLSANGGIFKPQGEAINSGAAEDIRVLVVGNPANTNALIAQTHAPDVPAERFTAMTRLDHNRAIAQLAKKLGVPSAEIRKITIWGNHSATQYPDIFHAQVGGRSGAEAVGDQKWIAEEFIPRVAKRGAEIIEVRGASSAASAASAAIDHVYTWVNGTPEGDWTSAAIPSDGSYGVPEGLISSFPVTAAGGKFEIVQGLELDAFSREKIDASVRELAEEREAVRALGLI</sequence>
<evidence type="ECO:0000255" key="1">
    <source>
        <dbReference type="HAMAP-Rule" id="MF_01517"/>
    </source>
</evidence>
<feature type="chain" id="PRO_0000294385" description="Malate dehydrogenase">
    <location>
        <begin position="1"/>
        <end position="329"/>
    </location>
</feature>
<feature type="active site" description="Proton acceptor" evidence="1">
    <location>
        <position position="188"/>
    </location>
</feature>
<feature type="binding site" evidence="1">
    <location>
        <begin position="12"/>
        <end position="18"/>
    </location>
    <ligand>
        <name>NAD(+)</name>
        <dbReference type="ChEBI" id="CHEBI:57540"/>
    </ligand>
</feature>
<feature type="binding site" evidence="1">
    <location>
        <position position="93"/>
    </location>
    <ligand>
        <name>substrate</name>
    </ligand>
</feature>
<feature type="binding site" evidence="1">
    <location>
        <position position="99"/>
    </location>
    <ligand>
        <name>substrate</name>
    </ligand>
</feature>
<feature type="binding site" evidence="1">
    <location>
        <position position="106"/>
    </location>
    <ligand>
        <name>NAD(+)</name>
        <dbReference type="ChEBI" id="CHEBI:57540"/>
    </ligand>
</feature>
<feature type="binding site" evidence="1">
    <location>
        <position position="113"/>
    </location>
    <ligand>
        <name>NAD(+)</name>
        <dbReference type="ChEBI" id="CHEBI:57540"/>
    </ligand>
</feature>
<feature type="binding site" evidence="1">
    <location>
        <begin position="130"/>
        <end position="132"/>
    </location>
    <ligand>
        <name>NAD(+)</name>
        <dbReference type="ChEBI" id="CHEBI:57540"/>
    </ligand>
</feature>
<feature type="binding site" evidence="1">
    <location>
        <position position="132"/>
    </location>
    <ligand>
        <name>substrate</name>
    </ligand>
</feature>
<feature type="binding site" evidence="1">
    <location>
        <position position="163"/>
    </location>
    <ligand>
        <name>substrate</name>
    </ligand>
</feature>
<proteinExistence type="inferred from homology"/>
<gene>
    <name evidence="1" type="primary">mdh</name>
    <name type="ordered locus">FRAAL5612</name>
</gene>
<dbReference type="EC" id="1.1.1.37" evidence="1"/>
<dbReference type="EMBL" id="CT573213">
    <property type="protein sequence ID" value="CAJ64245.1"/>
    <property type="molecule type" value="Genomic_DNA"/>
</dbReference>
<dbReference type="RefSeq" id="WP_011606693.1">
    <property type="nucleotide sequence ID" value="NC_008278.1"/>
</dbReference>
<dbReference type="SMR" id="Q0RE66"/>
<dbReference type="STRING" id="326424.FRAAL5612"/>
<dbReference type="KEGG" id="fal:FRAAL5612"/>
<dbReference type="eggNOG" id="COG0039">
    <property type="taxonomic scope" value="Bacteria"/>
</dbReference>
<dbReference type="HOGENOM" id="CLU_040727_2_0_11"/>
<dbReference type="OrthoDB" id="9802969at2"/>
<dbReference type="Proteomes" id="UP000000657">
    <property type="component" value="Chromosome"/>
</dbReference>
<dbReference type="GO" id="GO:0030060">
    <property type="term" value="F:L-malate dehydrogenase (NAD+) activity"/>
    <property type="evidence" value="ECO:0007669"/>
    <property type="project" value="UniProtKB-UniRule"/>
</dbReference>
<dbReference type="GO" id="GO:0006108">
    <property type="term" value="P:malate metabolic process"/>
    <property type="evidence" value="ECO:0007669"/>
    <property type="project" value="InterPro"/>
</dbReference>
<dbReference type="GO" id="GO:0006099">
    <property type="term" value="P:tricarboxylic acid cycle"/>
    <property type="evidence" value="ECO:0007669"/>
    <property type="project" value="UniProtKB-UniRule"/>
</dbReference>
<dbReference type="CDD" id="cd01338">
    <property type="entry name" value="MDH_chloroplast-like"/>
    <property type="match status" value="1"/>
</dbReference>
<dbReference type="FunFam" id="3.40.50.720:FF:000010">
    <property type="entry name" value="Malate dehydrogenase"/>
    <property type="match status" value="1"/>
</dbReference>
<dbReference type="FunFam" id="3.90.110.10:FF:000002">
    <property type="entry name" value="Malate dehydrogenase"/>
    <property type="match status" value="1"/>
</dbReference>
<dbReference type="Gene3D" id="3.90.110.10">
    <property type="entry name" value="Lactate dehydrogenase/glycoside hydrolase, family 4, C-terminal"/>
    <property type="match status" value="1"/>
</dbReference>
<dbReference type="Gene3D" id="3.40.50.720">
    <property type="entry name" value="NAD(P)-binding Rossmann-like Domain"/>
    <property type="match status" value="1"/>
</dbReference>
<dbReference type="HAMAP" id="MF_01517">
    <property type="entry name" value="Malate_dehydrog_2"/>
    <property type="match status" value="1"/>
</dbReference>
<dbReference type="InterPro" id="IPR001557">
    <property type="entry name" value="L-lactate/malate_DH"/>
</dbReference>
<dbReference type="InterPro" id="IPR022383">
    <property type="entry name" value="Lactate/malate_DH_C"/>
</dbReference>
<dbReference type="InterPro" id="IPR001236">
    <property type="entry name" value="Lactate/malate_DH_N"/>
</dbReference>
<dbReference type="InterPro" id="IPR015955">
    <property type="entry name" value="Lactate_DH/Glyco_Ohase_4_C"/>
</dbReference>
<dbReference type="InterPro" id="IPR001252">
    <property type="entry name" value="Malate_DH_AS"/>
</dbReference>
<dbReference type="InterPro" id="IPR010945">
    <property type="entry name" value="Malate_DH_type2"/>
</dbReference>
<dbReference type="InterPro" id="IPR036291">
    <property type="entry name" value="NAD(P)-bd_dom_sf"/>
</dbReference>
<dbReference type="NCBIfam" id="TIGR01759">
    <property type="entry name" value="MalateDH-SF1"/>
    <property type="match status" value="1"/>
</dbReference>
<dbReference type="NCBIfam" id="NF003916">
    <property type="entry name" value="PRK05442.1"/>
    <property type="match status" value="1"/>
</dbReference>
<dbReference type="PANTHER" id="PTHR23382">
    <property type="entry name" value="MALATE DEHYDROGENASE"/>
    <property type="match status" value="1"/>
</dbReference>
<dbReference type="Pfam" id="PF02866">
    <property type="entry name" value="Ldh_1_C"/>
    <property type="match status" value="1"/>
</dbReference>
<dbReference type="Pfam" id="PF00056">
    <property type="entry name" value="Ldh_1_N"/>
    <property type="match status" value="1"/>
</dbReference>
<dbReference type="PIRSF" id="PIRSF000102">
    <property type="entry name" value="Lac_mal_DH"/>
    <property type="match status" value="1"/>
</dbReference>
<dbReference type="SUPFAM" id="SSF56327">
    <property type="entry name" value="LDH C-terminal domain-like"/>
    <property type="match status" value="1"/>
</dbReference>
<dbReference type="SUPFAM" id="SSF51735">
    <property type="entry name" value="NAD(P)-binding Rossmann-fold domains"/>
    <property type="match status" value="1"/>
</dbReference>
<dbReference type="PROSITE" id="PS00068">
    <property type="entry name" value="MDH"/>
    <property type="match status" value="1"/>
</dbReference>